<evidence type="ECO:0000250" key="1">
    <source>
        <dbReference type="UniProtKB" id="P37692"/>
    </source>
</evidence>
<evidence type="ECO:0000303" key="2">
    <source>
    </source>
</evidence>
<evidence type="ECO:0000305" key="3"/>
<comment type="function">
    <text evidence="1">Glycosyltransferase involved in the biosynthesis of the core oligosaccharide region of lipopolysaccharide (LPS) (By similarity). Catalyzes the addition of the second heptose unit to the heptosyl-Kdo2-lipid A module (By similarity).</text>
</comment>
<comment type="catalytic activity">
    <reaction evidence="1">
        <text>an L-alpha-D-Hep-(1-&gt;5)-[alpha-Kdo-(2-&gt;4)]-alpha-Kdo-(2-&gt;6)-lipid A + ADP-L-glycero-beta-D-manno-heptose = an L-alpha-D-Hep-(1-&gt;3)-L-alpha-D-Hep-(1-&gt;5)-[alpha-Kdo-(2-&gt;4)]-alpha-Kdo-(2-&gt;6)-lipid A + ADP + H(+)</text>
        <dbReference type="Rhea" id="RHEA:74071"/>
        <dbReference type="ChEBI" id="CHEBI:15378"/>
        <dbReference type="ChEBI" id="CHEBI:61506"/>
        <dbReference type="ChEBI" id="CHEBI:193068"/>
        <dbReference type="ChEBI" id="CHEBI:193069"/>
        <dbReference type="ChEBI" id="CHEBI:456216"/>
        <dbReference type="EC" id="2.4.99.24"/>
    </reaction>
</comment>
<comment type="pathway">
    <text evidence="1">Bacterial outer membrane biogenesis; LPS core biosynthesis.</text>
</comment>
<comment type="similarity">
    <text evidence="3">Belongs to the glycosyltransferase 9 family.</text>
</comment>
<gene>
    <name evidence="1" type="primary">waaF</name>
    <name evidence="2" type="synonym">rfaF</name>
    <name type="ordered locus">STM3711</name>
</gene>
<proteinExistence type="inferred from homology"/>
<dbReference type="EC" id="2.4.99.24" evidence="1"/>
<dbReference type="EMBL" id="U06472">
    <property type="protein sequence ID" value="AAA59065.1"/>
    <property type="molecule type" value="Genomic_DNA"/>
</dbReference>
<dbReference type="EMBL" id="AE006468">
    <property type="protein sequence ID" value="AAL22570.1"/>
    <property type="molecule type" value="Genomic_DNA"/>
</dbReference>
<dbReference type="RefSeq" id="NP_462611.1">
    <property type="nucleotide sequence ID" value="NC_003197.2"/>
</dbReference>
<dbReference type="RefSeq" id="WP_000699190.1">
    <property type="nucleotide sequence ID" value="NC_003197.2"/>
</dbReference>
<dbReference type="SMR" id="P37421"/>
<dbReference type="STRING" id="99287.STM3711"/>
<dbReference type="CAZy" id="GT9">
    <property type="family name" value="Glycosyltransferase Family 9"/>
</dbReference>
<dbReference type="PaxDb" id="99287-STM3711"/>
<dbReference type="DNASU" id="1255235"/>
<dbReference type="GeneID" id="1255235"/>
<dbReference type="KEGG" id="stm:STM3711"/>
<dbReference type="PATRIC" id="fig|99287.12.peg.3925"/>
<dbReference type="HOGENOM" id="CLU_038371_7_0_6"/>
<dbReference type="PhylomeDB" id="P37421"/>
<dbReference type="BioCyc" id="MetaCyc:STM3711-MONOMER"/>
<dbReference type="BioCyc" id="SENT99287:STM3711-MONOMER"/>
<dbReference type="UniPathway" id="UPA00958"/>
<dbReference type="Proteomes" id="UP000001014">
    <property type="component" value="Chromosome"/>
</dbReference>
<dbReference type="GO" id="GO:0005829">
    <property type="term" value="C:cytosol"/>
    <property type="evidence" value="ECO:0000318"/>
    <property type="project" value="GO_Central"/>
</dbReference>
<dbReference type="GO" id="GO:0008713">
    <property type="term" value="F:ADP-heptose-lipopolysaccharide heptosyltransferase activity"/>
    <property type="evidence" value="ECO:0000318"/>
    <property type="project" value="GO_Central"/>
</dbReference>
<dbReference type="GO" id="GO:0009244">
    <property type="term" value="P:lipopolysaccharide core region biosynthetic process"/>
    <property type="evidence" value="ECO:0000315"/>
    <property type="project" value="CACAO"/>
</dbReference>
<dbReference type="CDD" id="cd03789">
    <property type="entry name" value="GT9_LPS_heptosyltransferase"/>
    <property type="match status" value="1"/>
</dbReference>
<dbReference type="FunFam" id="3.40.50.2000:FF:000022">
    <property type="entry name" value="ADP-heptose--LPS heptosyltransferase II"/>
    <property type="match status" value="1"/>
</dbReference>
<dbReference type="FunFam" id="3.40.50.2000:FF:000023">
    <property type="entry name" value="ADP-heptose--LPS heptosyltransferase II"/>
    <property type="match status" value="1"/>
</dbReference>
<dbReference type="Gene3D" id="3.40.50.2000">
    <property type="entry name" value="Glycogen Phosphorylase B"/>
    <property type="match status" value="2"/>
</dbReference>
<dbReference type="InterPro" id="IPR002201">
    <property type="entry name" value="Glyco_trans_9"/>
</dbReference>
<dbReference type="InterPro" id="IPR051199">
    <property type="entry name" value="LPS_LOS_Heptosyltrfase"/>
</dbReference>
<dbReference type="InterPro" id="IPR011910">
    <property type="entry name" value="RfaF"/>
</dbReference>
<dbReference type="NCBIfam" id="TIGR02195">
    <property type="entry name" value="heptsyl_trn_II"/>
    <property type="match status" value="1"/>
</dbReference>
<dbReference type="NCBIfam" id="NF008162">
    <property type="entry name" value="PRK10916.1"/>
    <property type="match status" value="1"/>
</dbReference>
<dbReference type="PANTHER" id="PTHR30160:SF7">
    <property type="entry name" value="ADP-HEPTOSE--LPS HEPTOSYLTRANSFERASE 2"/>
    <property type="match status" value="1"/>
</dbReference>
<dbReference type="PANTHER" id="PTHR30160">
    <property type="entry name" value="TETRAACYLDISACCHARIDE 4'-KINASE-RELATED"/>
    <property type="match status" value="1"/>
</dbReference>
<dbReference type="Pfam" id="PF01075">
    <property type="entry name" value="Glyco_transf_9"/>
    <property type="match status" value="1"/>
</dbReference>
<dbReference type="SUPFAM" id="SSF53756">
    <property type="entry name" value="UDP-Glycosyltransferase/glycogen phosphorylase"/>
    <property type="match status" value="1"/>
</dbReference>
<name>WAAF_SALTY</name>
<protein>
    <recommendedName>
        <fullName evidence="3">Lipopolysaccharide heptosyltransferase 2</fullName>
        <ecNumber evidence="1">2.4.99.24</ecNumber>
    </recommendedName>
    <alternativeName>
        <fullName evidence="3">ADP-heptose:lipopolysaccharide heptosyltransferase II</fullName>
        <shortName evidence="2">ADP-heptose:LPS heptosyltransferase II</shortName>
        <shortName evidence="2">Heptosyltransferase II</shortName>
    </alternativeName>
</protein>
<keyword id="KW-0328">Glycosyltransferase</keyword>
<keyword id="KW-0448">Lipopolysaccharide biosynthesis</keyword>
<keyword id="KW-1185">Reference proteome</keyword>
<keyword id="KW-0808">Transferase</keyword>
<accession>P37421</accession>
<organism>
    <name type="scientific">Salmonella typhimurium (strain LT2 / SGSC1412 / ATCC 700720)</name>
    <dbReference type="NCBI Taxonomy" id="99287"/>
    <lineage>
        <taxon>Bacteria</taxon>
        <taxon>Pseudomonadati</taxon>
        <taxon>Pseudomonadota</taxon>
        <taxon>Gammaproteobacteria</taxon>
        <taxon>Enterobacterales</taxon>
        <taxon>Enterobacteriaceae</taxon>
        <taxon>Salmonella</taxon>
    </lineage>
</organism>
<reference key="1">
    <citation type="journal article" date="1994" name="J. Bacteriol.">
        <title>Molecular analysis of the rfaD gene, for heptose synthesis, and the rfaF gene, for heptose transfer, in lipopolysaccharide synthesis in Salmonella typhimurium.</title>
        <authorList>
            <person name="Sirisena D.M."/>
            <person name="Maclachlan P.R."/>
            <person name="Liu S.L."/>
            <person name="Hessel A."/>
            <person name="Sanderson K.E."/>
        </authorList>
    </citation>
    <scope>NUCLEOTIDE SEQUENCE [GENOMIC DNA]</scope>
    <source>
        <strain>LT2</strain>
    </source>
</reference>
<reference key="2">
    <citation type="journal article" date="2001" name="Nature">
        <title>Complete genome sequence of Salmonella enterica serovar Typhimurium LT2.</title>
        <authorList>
            <person name="McClelland M."/>
            <person name="Sanderson K.E."/>
            <person name="Spieth J."/>
            <person name="Clifton S.W."/>
            <person name="Latreille P."/>
            <person name="Courtney L."/>
            <person name="Porwollik S."/>
            <person name="Ali J."/>
            <person name="Dante M."/>
            <person name="Du F."/>
            <person name="Hou S."/>
            <person name="Layman D."/>
            <person name="Leonard S."/>
            <person name="Nguyen C."/>
            <person name="Scott K."/>
            <person name="Holmes A."/>
            <person name="Grewal N."/>
            <person name="Mulvaney E."/>
            <person name="Ryan E."/>
            <person name="Sun H."/>
            <person name="Florea L."/>
            <person name="Miller W."/>
            <person name="Stoneking T."/>
            <person name="Nhan M."/>
            <person name="Waterston R."/>
            <person name="Wilson R.K."/>
        </authorList>
    </citation>
    <scope>NUCLEOTIDE SEQUENCE [LARGE SCALE GENOMIC DNA]</scope>
    <source>
        <strain>LT2 / SGSC1412 / ATCC 700720</strain>
    </source>
</reference>
<sequence>MKILVIGPSWVGDMMMSQSLYRTLKARYPQAIIDVMAPAWCRPLLSRMPEVNEAIPMPLGHGALEIGERRRLGHSLREKRYDRAWVLPNSFKSALIPFFANIPHRTGWRGEMRYGLLNDARVLDKDAWPLMVERYVALAYDKGVMRAAKDLPQPLLWPQLQVSEGEKSLMCSDFSLSSERPLIGFCPGAEFGPAKRWPHYHYAELAKQLINEGYQVVLFGSAKDHEAGNEILAALNSEQQAWCRNLAGETQLEQAVILIAACKAIVTNDSGLMHVAAALDRPLVALYGPSSPDFTPPLSHKARVIRLITGYHKVRKGDTAQGYHQSLIDITPQRVLEELHSLLSEEGV</sequence>
<feature type="chain" id="PRO_0000207264" description="Lipopolysaccharide heptosyltransferase 2">
    <location>
        <begin position="1"/>
        <end position="348"/>
    </location>
</feature>